<name>MAGI2_MOUSE</name>
<keyword id="KW-0002">3D-structure</keyword>
<keyword id="KW-0025">Alternative splicing</keyword>
<keyword id="KW-1003">Cell membrane</keyword>
<keyword id="KW-0966">Cell projection</keyword>
<keyword id="KW-0963">Cytoplasm</keyword>
<keyword id="KW-0206">Cytoskeleton</keyword>
<keyword id="KW-0254">Endocytosis</keyword>
<keyword id="KW-0967">Endosome</keyword>
<keyword id="KW-0472">Membrane</keyword>
<keyword id="KW-0524">Neurogenesis</keyword>
<keyword id="KW-0597">Phosphoprotein</keyword>
<keyword id="KW-1185">Reference proteome</keyword>
<keyword id="KW-0677">Repeat</keyword>
<keyword id="KW-0770">Synapse</keyword>
<keyword id="KW-0771">Synaptosome</keyword>
<feature type="chain" id="PRO_0000094587" description="Membrane-associated guanylate kinase, WW and PDZ domain-containing protein 2">
    <location>
        <begin position="1"/>
        <end position="1275"/>
    </location>
</feature>
<feature type="domain" description="PDZ 1" evidence="5">
    <location>
        <begin position="17"/>
        <end position="101"/>
    </location>
</feature>
<feature type="domain" description="Guanylate kinase-like" evidence="4">
    <location>
        <begin position="109"/>
        <end position="283"/>
    </location>
</feature>
<feature type="domain" description="WW 1" evidence="6">
    <location>
        <begin position="301"/>
        <end position="334"/>
    </location>
</feature>
<feature type="domain" description="WW 2" evidence="6">
    <location>
        <begin position="347"/>
        <end position="380"/>
    </location>
</feature>
<feature type="domain" description="PDZ 2" evidence="5">
    <location>
        <begin position="425"/>
        <end position="509"/>
    </location>
</feature>
<feature type="domain" description="PDZ 3" evidence="5">
    <location>
        <begin position="604"/>
        <end position="682"/>
    </location>
</feature>
<feature type="domain" description="PDZ 4" evidence="5">
    <location>
        <begin position="777"/>
        <end position="859"/>
    </location>
</feature>
<feature type="domain" description="PDZ 5" evidence="5">
    <location>
        <begin position="919"/>
        <end position="1009"/>
    </location>
</feature>
<feature type="domain" description="PDZ 6" evidence="5">
    <location>
        <begin position="1139"/>
        <end position="1221"/>
    </location>
</feature>
<feature type="region of interest" description="Disordered" evidence="7">
    <location>
        <begin position="203"/>
        <end position="305"/>
    </location>
</feature>
<feature type="region of interest" description="Interaction with DDN" evidence="1">
    <location>
        <begin position="301"/>
        <end position="380"/>
    </location>
</feature>
<feature type="region of interest" description="Disordered" evidence="7">
    <location>
        <begin position="698"/>
        <end position="740"/>
    </location>
</feature>
<feature type="region of interest" description="Disordered" evidence="7">
    <location>
        <begin position="868"/>
        <end position="912"/>
    </location>
</feature>
<feature type="region of interest" description="Disordered" evidence="7">
    <location>
        <begin position="1010"/>
        <end position="1128"/>
    </location>
</feature>
<feature type="compositionally biased region" description="Basic and acidic residues" evidence="7">
    <location>
        <begin position="280"/>
        <end position="295"/>
    </location>
</feature>
<feature type="compositionally biased region" description="Polar residues" evidence="7">
    <location>
        <begin position="699"/>
        <end position="708"/>
    </location>
</feature>
<feature type="compositionally biased region" description="Low complexity" evidence="7">
    <location>
        <begin position="893"/>
        <end position="907"/>
    </location>
</feature>
<feature type="compositionally biased region" description="Polar residues" evidence="7">
    <location>
        <begin position="1010"/>
        <end position="1040"/>
    </location>
</feature>
<feature type="compositionally biased region" description="Basic and acidic residues" evidence="7">
    <location>
        <begin position="1067"/>
        <end position="1083"/>
    </location>
</feature>
<feature type="modified residue" description="Phosphotyrosine" evidence="19 20">
    <location>
        <position position="361"/>
    </location>
</feature>
<feature type="modified residue" description="Phosphoserine" evidence="2">
    <location>
        <position position="685"/>
    </location>
</feature>
<feature type="modified residue" description="Phosphotyrosine" evidence="19">
    <location>
        <position position="826"/>
    </location>
</feature>
<feature type="modified residue" description="Phosphoserine" evidence="2">
    <location>
        <position position="883"/>
    </location>
</feature>
<feature type="modified residue" description="Phosphoserine" evidence="2">
    <location>
        <position position="884"/>
    </location>
</feature>
<feature type="modified residue" description="Phosphoserine" evidence="20">
    <location>
        <position position="1013"/>
    </location>
</feature>
<feature type="splice variant" id="VSP_018580" description="In isoform 3." evidence="17">
    <location>
        <begin position="1"/>
        <end position="390"/>
    </location>
</feature>
<feature type="splice variant" id="VSP_008436" description="In isoform 2 and isoform 4." evidence="15 16 17">
    <location>
        <begin position="1"/>
        <end position="163"/>
    </location>
</feature>
<feature type="splice variant" id="VSP_018581" description="In isoform 4." evidence="17">
    <original>QQVPPRTSFRMDSSG</original>
    <variation>R</variation>
    <location>
        <begin position="756"/>
        <end position="770"/>
    </location>
</feature>
<feature type="splice variant" id="VSP_008437" description="In isoform 3." evidence="17">
    <original>MVPSSLSMCMKSDKHGSPYFYLLGHPKDTTNPTPGVLPLPPPQACRK</original>
    <variation>AFHSFLHLCSAFSVF</variation>
    <location>
        <begin position="1229"/>
        <end position="1275"/>
    </location>
</feature>
<feature type="mutagenesis site" description="Does not affect interaction with USH1G." evidence="14">
    <original>S</original>
    <variation>A</variation>
    <location>
        <position position="1152"/>
    </location>
</feature>
<feature type="turn" evidence="24">
    <location>
        <begin position="11"/>
        <end position="14"/>
    </location>
</feature>
<feature type="strand" evidence="24">
    <location>
        <begin position="16"/>
        <end position="21"/>
    </location>
</feature>
<feature type="helix" evidence="23">
    <location>
        <begin position="24"/>
        <end position="26"/>
    </location>
</feature>
<feature type="strand" evidence="24">
    <location>
        <begin position="32"/>
        <end position="34"/>
    </location>
</feature>
<feature type="helix" evidence="24">
    <location>
        <begin position="36"/>
        <end position="38"/>
    </location>
</feature>
<feature type="strand" evidence="24">
    <location>
        <begin position="42"/>
        <end position="44"/>
    </location>
</feature>
<feature type="strand" evidence="24">
    <location>
        <begin position="51"/>
        <end position="54"/>
    </location>
</feature>
<feature type="strand" evidence="24">
    <location>
        <begin position="56"/>
        <end position="58"/>
    </location>
</feature>
<feature type="strand" evidence="24">
    <location>
        <begin position="65"/>
        <end position="69"/>
    </location>
</feature>
<feature type="helix" evidence="24">
    <location>
        <begin position="79"/>
        <end position="87"/>
    </location>
</feature>
<feature type="strand" evidence="24">
    <location>
        <begin position="91"/>
        <end position="98"/>
    </location>
</feature>
<feature type="helix" evidence="24">
    <location>
        <begin position="108"/>
        <end position="113"/>
    </location>
</feature>
<feature type="helix" evidence="24">
    <location>
        <begin position="121"/>
        <end position="135"/>
    </location>
</feature>
<feature type="strand" evidence="24">
    <location>
        <begin position="140"/>
        <end position="143"/>
    </location>
</feature>
<feature type="turn" evidence="24">
    <location>
        <begin position="151"/>
        <end position="153"/>
    </location>
</feature>
<feature type="helix" evidence="24">
    <location>
        <begin position="160"/>
        <end position="168"/>
    </location>
</feature>
<feature type="strand" evidence="24">
    <location>
        <begin position="172"/>
        <end position="178"/>
    </location>
</feature>
<feature type="strand" evidence="24">
    <location>
        <begin position="181"/>
        <end position="186"/>
    </location>
</feature>
<feature type="turn" evidence="21">
    <location>
        <begin position="295"/>
        <end position="297"/>
    </location>
</feature>
<feature type="strand" evidence="21">
    <location>
        <begin position="307"/>
        <end position="311"/>
    </location>
</feature>
<feature type="strand" evidence="21">
    <location>
        <begin position="317"/>
        <end position="321"/>
    </location>
</feature>
<feature type="turn" evidence="21">
    <location>
        <begin position="322"/>
        <end position="325"/>
    </location>
</feature>
<feature type="strand" evidence="21">
    <location>
        <begin position="326"/>
        <end position="330"/>
    </location>
</feature>
<feature type="helix" evidence="21">
    <location>
        <begin position="332"/>
        <end position="334"/>
    </location>
</feature>
<feature type="helix" evidence="21">
    <location>
        <begin position="341"/>
        <end position="343"/>
    </location>
</feature>
<feature type="strand" evidence="21">
    <location>
        <begin position="353"/>
        <end position="358"/>
    </location>
</feature>
<feature type="turn" evidence="21">
    <location>
        <begin position="359"/>
        <end position="361"/>
    </location>
</feature>
<feature type="strand" evidence="21">
    <location>
        <begin position="362"/>
        <end position="367"/>
    </location>
</feature>
<feature type="turn" evidence="21">
    <location>
        <begin position="368"/>
        <end position="371"/>
    </location>
</feature>
<feature type="strand" evidence="21">
    <location>
        <begin position="372"/>
        <end position="376"/>
    </location>
</feature>
<feature type="helix" evidence="21">
    <location>
        <begin position="378"/>
        <end position="386"/>
    </location>
</feature>
<feature type="strand" evidence="22">
    <location>
        <begin position="918"/>
        <end position="923"/>
    </location>
</feature>
<feature type="strand" evidence="22">
    <location>
        <begin position="926"/>
        <end position="928"/>
    </location>
</feature>
<feature type="strand" evidence="22">
    <location>
        <begin position="932"/>
        <end position="936"/>
    </location>
</feature>
<feature type="strand" evidence="22">
    <location>
        <begin position="952"/>
        <end position="956"/>
    </location>
</feature>
<feature type="helix" evidence="22">
    <location>
        <begin position="961"/>
        <end position="965"/>
    </location>
</feature>
<feature type="strand" evidence="22">
    <location>
        <begin position="976"/>
        <end position="979"/>
    </location>
</feature>
<feature type="helix" evidence="22">
    <location>
        <begin position="987"/>
        <end position="995"/>
    </location>
</feature>
<feature type="strand" evidence="22">
    <location>
        <begin position="999"/>
        <end position="1005"/>
    </location>
</feature>
<comment type="function">
    <text evidence="2 3 8 14">Seems to act as a scaffold molecule at synaptic junctions by assembling neurotransmitter receptors and cell adhesion proteins (By similarity). Plays a role in nerve growth factor (NGF)-induced recruitment of RAPGEF2 to late endosomes and neurite outgrowth (By similarity). May play a role in regulating activin-mediated signaling in neuronal cells (PubMed:10681527). Enhances the ability of PTEN to suppress AKT1 activation (By similarity). Plays a role in receptor-mediated clathrin-dependent endocytosis which is required for ciliogenesis (PubMed:24608321).</text>
</comment>
<comment type="subunit">
    <text evidence="2 8 9 10 11 12 13 14">Interacts (via its WW domains) with DRPLA (By similarity). Interacts (via its second PDZ domain) with PTEN (via unphosphorylated C-terminus); this interaction diminishes the degradation rate of PTEN (By similarity). Interacts (via guanylate kinase domain) with DLGAP1 (By similarity). Interacts (via the PDZ domains) with GRIN2A, GRID2 and NLGN1 (By similarity). Interacts with CTNND2, CTNNB1 and MAGUIN-1 (By similarity). Interacts with ACVR2A, SMAD2 and SMAD3 (PubMed:10681527). Part of a complex consisting of MAGI2/ARIP1, ACVR2A, ACVR1B and SMAD3 (PubMed:10681527). May interact with HTR2A (PubMed:14988405). Interacts with RAPGEF2 (By similarity). Identified in a complex with ACTN4, CASK, IQGAP1, NPHS1, SPTAN1 and SPTBN1 (By similarity). Interacts with DDN (By similarity). Found in a complex, at least composed of KIDINS220, MAGI2, NTRK1 and RAPGEF2; the complex is mainly formed at late endosomes in a NGF-dependent manner (By similarity). Interacts with RAPGEF2; the interaction occurs before or after nerve growth factor (NGF) stimulation (By similarity). Interacts (via PDZ domain) with KIDINS220 (via C-terminal domain) (By similarity). Interacts with IGSF9 and HTR4 (PubMed:15340156, PubMed:15466885). Interacts with DLL1 (PubMed:15509766). Found in a complex with IGSF9B and NLGN2; the interaction with IGSF9B is mediated via the PDZ 5 and PDZ 6 domains, while the interaction with NLGN2 is mediated via the WW1, WW2 and PDZ2 domains (PubMed:23751499). Interacts (via PDZ 6 domain) with USH1G (via SAM domain); the interaction is triggered by phosphorylation of USH1G by CK2 and negatively regulates MAGI2-mediated endocytosis (PubMed:24608321).</text>
</comment>
<comment type="interaction">
    <interactant intactId="EBI-297151">
        <id>Q9WVQ1</id>
    </interactant>
    <interactant intactId="EBI-297125">
        <id>Q61483</id>
        <label>Dll1</label>
    </interactant>
    <organismsDiffer>false</organismsDiffer>
    <experiments>3</experiments>
</comment>
<comment type="subcellular location">
    <subcellularLocation>
        <location evidence="1">Cytoplasm</location>
    </subcellularLocation>
    <subcellularLocation>
        <location evidence="1">Late endosome</location>
    </subcellularLocation>
    <subcellularLocation>
        <location evidence="1">Synapse</location>
        <location evidence="1">Synaptosome</location>
    </subcellularLocation>
    <subcellularLocation>
        <location evidence="1">Cell membrane</location>
        <topology evidence="1">Peripheral membrane protein</topology>
    </subcellularLocation>
    <subcellularLocation>
        <location evidence="14">Cytoplasm</location>
        <location evidence="14">Cytoskeleton</location>
        <location evidence="14">Microtubule organizing center</location>
        <location evidence="14">Centrosome</location>
    </subcellularLocation>
    <subcellularLocation>
        <location evidence="14">Cell projection</location>
        <location evidence="14">Cilium</location>
    </subcellularLocation>
    <subcellularLocation>
        <location evidence="14">Cytoplasm</location>
        <location evidence="14">Cytoskeleton</location>
        <location evidence="14">Microtubule organizing center</location>
        <location evidence="14">Centrosome</location>
        <location evidence="14">Centriole</location>
    </subcellularLocation>
    <subcellularLocation>
        <location evidence="14">Photoreceptor inner segment</location>
    </subcellularLocation>
    <subcellularLocation>
        <location evidence="14">Cell projection</location>
        <location evidence="14">Cilium</location>
        <location evidence="14">Photoreceptor outer segment</location>
    </subcellularLocation>
    <text evidence="1">Localized diffusely in the cytoplasm before nerve growth factor (NGF) stimulation. Recruited to late endosomes after NGF stimulation. Membrane-associated in synaptosomes (By similarity).</text>
</comment>
<comment type="alternative products">
    <event type="alternative splicing"/>
    <isoform>
        <id>Q9WVQ1-1</id>
        <name>1</name>
        <name>long</name>
        <sequence type="displayed"/>
    </isoform>
    <isoform>
        <id>Q9WVQ1-2</id>
        <name>2</name>
        <name>short</name>
        <sequence type="described" ref="VSP_008436"/>
    </isoform>
    <isoform>
        <id>Q9WVQ1-3</id>
        <name>3</name>
        <sequence type="described" ref="VSP_018580 VSP_008437"/>
    </isoform>
    <isoform>
        <id>Q9WVQ1-4</id>
        <name>4</name>
        <sequence type="described" ref="VSP_008436 VSP_018581"/>
    </isoform>
</comment>
<comment type="tissue specificity">
    <text evidence="14">Expressed throughout the retina except in the nuclear layers and the photoreceptor outer segments (at protein level) (PubMed:24608321). Highest retinal expression is observed in the outer plexiform layer, the outer limiting membrane and the inner segment of photoreceptor cells (at protein level) (PubMed:24608321). Expressed in brain.</text>
</comment>
<comment type="miscellaneous">
    <molecule>Isoform 2</molecule>
    <text evidence="18">Major.</text>
</comment>
<comment type="miscellaneous">
    <molecule>Isoform 3</molecule>
    <text evidence="18">May be due to an intron retention.</text>
</comment>
<comment type="similarity">
    <text evidence="18">Belongs to the MAGUK family.</text>
</comment>
<proteinExistence type="evidence at protein level"/>
<gene>
    <name type="primary">Magi2</name>
    <name type="synonym">Acvrinp1</name>
    <name type="synonym">Aip1</name>
    <name evidence="15" type="synonym">Arip1</name>
</gene>
<reference key="1">
    <citation type="journal article" date="2000" name="J. Biol. Chem.">
        <title>Identification and characterization of a PDZ protein that interacts with activin types II receptors.</title>
        <authorList>
            <person name="Shoji H."/>
            <person name="Tsuchida K."/>
            <person name="Kishi H."/>
            <person name="Yamakawa N."/>
            <person name="Matsuzaki T."/>
            <person name="Liu Z."/>
            <person name="Nakamura T."/>
            <person name="Sugino H."/>
        </authorList>
    </citation>
    <scope>NUCLEOTIDE SEQUENCE [MRNA] (ISOFORMS 1 AND 2)</scope>
    <scope>FUNCTION</scope>
    <scope>INTERACTION WITH SMAD2; SMAD3 AND ACVR2A</scope>
    <scope>IDENTIFICATION IN A COMPLEX WITH ACVR2A; ACVR1B AND SMAD3</scope>
    <source>
        <strain>ICR</strain>
        <tissue>Brain</tissue>
    </source>
</reference>
<reference key="2">
    <citation type="journal article" date="2005" name="Science">
        <title>The transcriptional landscape of the mammalian genome.</title>
        <authorList>
            <person name="Carninci P."/>
            <person name="Kasukawa T."/>
            <person name="Katayama S."/>
            <person name="Gough J."/>
            <person name="Frith M.C."/>
            <person name="Maeda N."/>
            <person name="Oyama R."/>
            <person name="Ravasi T."/>
            <person name="Lenhard B."/>
            <person name="Wells C."/>
            <person name="Kodzius R."/>
            <person name="Shimokawa K."/>
            <person name="Bajic V.B."/>
            <person name="Brenner S.E."/>
            <person name="Batalov S."/>
            <person name="Forrest A.R."/>
            <person name="Zavolan M."/>
            <person name="Davis M.J."/>
            <person name="Wilming L.G."/>
            <person name="Aidinis V."/>
            <person name="Allen J.E."/>
            <person name="Ambesi-Impiombato A."/>
            <person name="Apweiler R."/>
            <person name="Aturaliya R.N."/>
            <person name="Bailey T.L."/>
            <person name="Bansal M."/>
            <person name="Baxter L."/>
            <person name="Beisel K.W."/>
            <person name="Bersano T."/>
            <person name="Bono H."/>
            <person name="Chalk A.M."/>
            <person name="Chiu K.P."/>
            <person name="Choudhary V."/>
            <person name="Christoffels A."/>
            <person name="Clutterbuck D.R."/>
            <person name="Crowe M.L."/>
            <person name="Dalla E."/>
            <person name="Dalrymple B.P."/>
            <person name="de Bono B."/>
            <person name="Della Gatta G."/>
            <person name="di Bernardo D."/>
            <person name="Down T."/>
            <person name="Engstrom P."/>
            <person name="Fagiolini M."/>
            <person name="Faulkner G."/>
            <person name="Fletcher C.F."/>
            <person name="Fukushima T."/>
            <person name="Furuno M."/>
            <person name="Futaki S."/>
            <person name="Gariboldi M."/>
            <person name="Georgii-Hemming P."/>
            <person name="Gingeras T.R."/>
            <person name="Gojobori T."/>
            <person name="Green R.E."/>
            <person name="Gustincich S."/>
            <person name="Harbers M."/>
            <person name="Hayashi Y."/>
            <person name="Hensch T.K."/>
            <person name="Hirokawa N."/>
            <person name="Hill D."/>
            <person name="Huminiecki L."/>
            <person name="Iacono M."/>
            <person name="Ikeo K."/>
            <person name="Iwama A."/>
            <person name="Ishikawa T."/>
            <person name="Jakt M."/>
            <person name="Kanapin A."/>
            <person name="Katoh M."/>
            <person name="Kawasawa Y."/>
            <person name="Kelso J."/>
            <person name="Kitamura H."/>
            <person name="Kitano H."/>
            <person name="Kollias G."/>
            <person name="Krishnan S.P."/>
            <person name="Kruger A."/>
            <person name="Kummerfeld S.K."/>
            <person name="Kurochkin I.V."/>
            <person name="Lareau L.F."/>
            <person name="Lazarevic D."/>
            <person name="Lipovich L."/>
            <person name="Liu J."/>
            <person name="Liuni S."/>
            <person name="McWilliam S."/>
            <person name="Madan Babu M."/>
            <person name="Madera M."/>
            <person name="Marchionni L."/>
            <person name="Matsuda H."/>
            <person name="Matsuzawa S."/>
            <person name="Miki H."/>
            <person name="Mignone F."/>
            <person name="Miyake S."/>
            <person name="Morris K."/>
            <person name="Mottagui-Tabar S."/>
            <person name="Mulder N."/>
            <person name="Nakano N."/>
            <person name="Nakauchi H."/>
            <person name="Ng P."/>
            <person name="Nilsson R."/>
            <person name="Nishiguchi S."/>
            <person name="Nishikawa S."/>
            <person name="Nori F."/>
            <person name="Ohara O."/>
            <person name="Okazaki Y."/>
            <person name="Orlando V."/>
            <person name="Pang K.C."/>
            <person name="Pavan W.J."/>
            <person name="Pavesi G."/>
            <person name="Pesole G."/>
            <person name="Petrovsky N."/>
            <person name="Piazza S."/>
            <person name="Reed J."/>
            <person name="Reid J.F."/>
            <person name="Ring B.Z."/>
            <person name="Ringwald M."/>
            <person name="Rost B."/>
            <person name="Ruan Y."/>
            <person name="Salzberg S.L."/>
            <person name="Sandelin A."/>
            <person name="Schneider C."/>
            <person name="Schoenbach C."/>
            <person name="Sekiguchi K."/>
            <person name="Semple C.A."/>
            <person name="Seno S."/>
            <person name="Sessa L."/>
            <person name="Sheng Y."/>
            <person name="Shibata Y."/>
            <person name="Shimada H."/>
            <person name="Shimada K."/>
            <person name="Silva D."/>
            <person name="Sinclair B."/>
            <person name="Sperling S."/>
            <person name="Stupka E."/>
            <person name="Sugiura K."/>
            <person name="Sultana R."/>
            <person name="Takenaka Y."/>
            <person name="Taki K."/>
            <person name="Tammoja K."/>
            <person name="Tan S.L."/>
            <person name="Tang S."/>
            <person name="Taylor M.S."/>
            <person name="Tegner J."/>
            <person name="Teichmann S.A."/>
            <person name="Ueda H.R."/>
            <person name="van Nimwegen E."/>
            <person name="Verardo R."/>
            <person name="Wei C.L."/>
            <person name="Yagi K."/>
            <person name="Yamanishi H."/>
            <person name="Zabarovsky E."/>
            <person name="Zhu S."/>
            <person name="Zimmer A."/>
            <person name="Hide W."/>
            <person name="Bult C."/>
            <person name="Grimmond S.M."/>
            <person name="Teasdale R.D."/>
            <person name="Liu E.T."/>
            <person name="Brusic V."/>
            <person name="Quackenbush J."/>
            <person name="Wahlestedt C."/>
            <person name="Mattick J.S."/>
            <person name="Hume D.A."/>
            <person name="Kai C."/>
            <person name="Sasaki D."/>
            <person name="Tomaru Y."/>
            <person name="Fukuda S."/>
            <person name="Kanamori-Katayama M."/>
            <person name="Suzuki M."/>
            <person name="Aoki J."/>
            <person name="Arakawa T."/>
            <person name="Iida J."/>
            <person name="Imamura K."/>
            <person name="Itoh M."/>
            <person name="Kato T."/>
            <person name="Kawaji H."/>
            <person name="Kawagashira N."/>
            <person name="Kawashima T."/>
            <person name="Kojima M."/>
            <person name="Kondo S."/>
            <person name="Konno H."/>
            <person name="Nakano K."/>
            <person name="Ninomiya N."/>
            <person name="Nishio T."/>
            <person name="Okada M."/>
            <person name="Plessy C."/>
            <person name="Shibata K."/>
            <person name="Shiraki T."/>
            <person name="Suzuki S."/>
            <person name="Tagami M."/>
            <person name="Waki K."/>
            <person name="Watahiki A."/>
            <person name="Okamura-Oho Y."/>
            <person name="Suzuki H."/>
            <person name="Kawai J."/>
            <person name="Hayashizaki Y."/>
        </authorList>
    </citation>
    <scope>NUCLEOTIDE SEQUENCE [LARGE SCALE MRNA] (ISOFORMS 3 AND 4)</scope>
    <source>
        <strain>C57BL/6J</strain>
        <tissue>Brain</tissue>
        <tissue>Spinal cord</tissue>
    </source>
</reference>
<reference key="3">
    <citation type="journal article" date="2004" name="Genome Res.">
        <title>The status, quality, and expansion of the NIH full-length cDNA project: the Mammalian Gene Collection (MGC).</title>
        <authorList>
            <consortium name="The MGC Project Team"/>
        </authorList>
    </citation>
    <scope>NUCLEOTIDE SEQUENCE [LARGE SCALE MRNA] (ISOFORM 2)</scope>
    <source>
        <strain>C57BL/6J</strain>
        <tissue>Brain</tissue>
    </source>
</reference>
<reference key="4">
    <citation type="journal article" date="2004" name="Development">
        <title>Delta proteins and MAGI proteins: an interaction of Notch ligands with intracellular scaffolding molecules and its significance for zebrafish development.</title>
        <authorList>
            <person name="Wright G.J."/>
            <person name="Leslie J.D."/>
            <person name="Ariza-McNaughton L."/>
            <person name="Lewis J."/>
        </authorList>
    </citation>
    <scope>INTERACTION WITH DLL1</scope>
</reference>
<reference key="5">
    <citation type="journal article" date="2004" name="J. Biol. Chem.">
        <title>The serotonin 5-HT2A and 5-HT2C receptors interact with specific sets of PDZ proteins.</title>
        <authorList>
            <person name="Becamel C."/>
            <person name="Gavarini S."/>
            <person name="Chanrion B."/>
            <person name="Alonso G."/>
            <person name="Galeotti N."/>
            <person name="Dumuis A."/>
            <person name="Bockaert J."/>
            <person name="Marin P."/>
        </authorList>
    </citation>
    <scope>INTERACTION WITH HTR2A</scope>
</reference>
<reference key="6">
    <citation type="journal article" date="2004" name="J. Cell Sci.">
        <title>New sorting nexin (SNX27) and NHERF specifically interact with the 5-HT4a receptor splice variant: roles in receptor targeting.</title>
        <authorList>
            <person name="Joubert L."/>
            <person name="Hanson B."/>
            <person name="Barthet G."/>
            <person name="Sebben M."/>
            <person name="Claeysen S."/>
            <person name="Hong W."/>
            <person name="Marin P."/>
            <person name="Dumuis A."/>
            <person name="Bockaert J."/>
        </authorList>
    </citation>
    <scope>INTERACTION WITH HTR4</scope>
</reference>
<reference key="7">
    <citation type="journal article" date="2004" name="Proc. Natl. Acad. Sci. U.S.A.">
        <title>The immunoglobulin family member dendrite arborization and synapse maturation 1 (Dasm1) controls excitatory synapse maturation.</title>
        <authorList>
            <person name="Shi S.-H."/>
            <person name="Cheng T."/>
            <person name="Jan L.Y."/>
            <person name="Jan Y.-N."/>
        </authorList>
    </citation>
    <scope>INTERACTION WITH IGSF9</scope>
</reference>
<reference key="8">
    <citation type="journal article" date="2008" name="J. Proteome Res.">
        <title>Large-scale identification and evolution indexing of tyrosine phosphorylation sites from murine brain.</title>
        <authorList>
            <person name="Ballif B.A."/>
            <person name="Carey G.R."/>
            <person name="Sunyaev S.R."/>
            <person name="Gygi S.P."/>
        </authorList>
    </citation>
    <scope>PHOSPHORYLATION [LARGE SCALE ANALYSIS] AT TYR-361 AND TYR-826</scope>
    <scope>IDENTIFICATION BY MASS SPECTROMETRY [LARGE SCALE ANALYSIS]</scope>
    <source>
        <tissue>Brain</tissue>
    </source>
</reference>
<reference key="9">
    <citation type="journal article" date="2010" name="Cell">
        <title>A tissue-specific atlas of mouse protein phosphorylation and expression.</title>
        <authorList>
            <person name="Huttlin E.L."/>
            <person name="Jedrychowski M.P."/>
            <person name="Elias J.E."/>
            <person name="Goswami T."/>
            <person name="Rad R."/>
            <person name="Beausoleil S.A."/>
            <person name="Villen J."/>
            <person name="Haas W."/>
            <person name="Sowa M.E."/>
            <person name="Gygi S.P."/>
        </authorList>
    </citation>
    <scope>PHOSPHORYLATION [LARGE SCALE ANALYSIS] AT TYR-361 AND SER-1013</scope>
    <scope>IDENTIFICATION BY MASS SPECTROMETRY [LARGE SCALE ANALYSIS]</scope>
    <source>
        <tissue>Brain</tissue>
    </source>
</reference>
<reference key="10">
    <citation type="journal article" date="2013" name="J. Cell Biol.">
        <title>The adhesion protein IgSF9b is coupled to neuroligin 2 via S-SCAM to promote inhibitory synapse development.</title>
        <authorList>
            <person name="Woo J."/>
            <person name="Kwon S.K."/>
            <person name="Nam J."/>
            <person name="Choi S."/>
            <person name="Takahashi H."/>
            <person name="Krueger D."/>
            <person name="Park J."/>
            <person name="Lee Y."/>
            <person name="Bae J.Y."/>
            <person name="Lee D."/>
            <person name="Ko J."/>
            <person name="Kim H."/>
            <person name="Kim M.H."/>
            <person name="Bae Y.C."/>
            <person name="Chang S."/>
            <person name="Craig A.M."/>
            <person name="Kim E."/>
        </authorList>
    </citation>
    <scope>IDENTIFICATION IN A COMPLEX WITH IGSF9B AND NLGN2</scope>
</reference>
<reference key="11">
    <citation type="journal article" date="2014" name="Hum. Mol. Genet.">
        <title>Phosphorylation of the Usher syndrome 1G protein SANS controls Magi2-mediated endocytosis.</title>
        <authorList>
            <person name="Bauss K."/>
            <person name="Knapp B."/>
            <person name="Jores P."/>
            <person name="Roepman R."/>
            <person name="Kremer H."/>
            <person name="Wijk E.V."/>
            <person name="Maerker T."/>
            <person name="Wolfrum U."/>
        </authorList>
    </citation>
    <scope>FUNCTION</scope>
    <scope>INTERACTION WITH USH1G</scope>
    <scope>SUBCELLULAR LOCATION</scope>
    <scope>TISSUE SPECIFICITY</scope>
    <scope>MUTAGENESIS OF SER-1152</scope>
</reference>
<protein>
    <recommendedName>
        <fullName>Membrane-associated guanylate kinase, WW and PDZ domain-containing protein 2</fullName>
    </recommendedName>
    <alternativeName>
        <fullName>Activin receptor-interacting protein 1</fullName>
        <shortName>Acvrip1</shortName>
    </alternativeName>
    <alternativeName>
        <fullName>Atrophin-1-interacting protein 1</fullName>
        <shortName>AIP-1</shortName>
    </alternativeName>
    <alternativeName>
        <fullName>Membrane-associated guanylate kinase inverted 2</fullName>
        <shortName>MAGI-2</shortName>
    </alternativeName>
</protein>
<accession>Q9WVQ1</accession>
<accession>Q3UH81</accession>
<accession>Q6GT88</accession>
<accession>Q8BYT1</accession>
<accession>Q8CA85</accession>
<sequence>MSKSLKKKSHWTSKVHESVIGRNPEGQLGFELKGGAENGQFPYLGEVKPGKVAYESGSKLVSEELLLEVNETPVAGLTIRDVLAVIKHCKDPLRLKCVKQGGIVDKDLRHYLNLRFQKGSVDHELQQIIRDNLYLRTVPCTTRPHKEGEVPGVDYIFITVEEFMELEKSGALLESGTYEDNYYGTPKPPAEPAPLLNVTDQILPGATPSAEGKRKRNKSVTNMEKASIEPPEEEEEERPVVNGNGVVITPESSEHEDKSAGASGETPSQPYPAPVYSQPEELKDQMDDTKPTKPEENEDSDPLPDNWEMAYTEKGEVYFIDHNTKTTSWLDPRLAKKAKPPEECKENELPYGWEKIDDPIYGTYYVDHINRRTQFENPVLEAKRKLQQHNMPHTELGAKPLQAPGFREKPLFTRDASQLKGTFLSTTLKKSNMGFGFTIIGGDEPDEFLQVKSVIPDGPAAQDGKMETGDVIVYINEVCVLGHTHADVVKLFQSVPIGQSVNLVLCRGYPLPFDPEDPANSMVPPLAIMERPPPVMVNGRHNYETYLEYISRTSQSVPDITDRPPHSLHSMPADGQLDGTYPPPVHDDNVSMASSGATQAELMTLTIVKGAQGFGFTIADSPTGQRVKQILDIQGCPGLCEGDLIVEINQQNVQNLSHTEVVDILKDCPVGSETSLIIHRGGFFSPWKTPKPMMDRWENQGSPQTSLSAPAVPQNLPFPPALHRSSFPDSTEAFDPRKPDPYELYEKSRAIYESRQQVPPRTSFRMDSSGPDYKELDVHLRRMESGFGFRILGGDEPGQPILIGAVIAMGSADRDGRLHPGDELVYVDGIPVAGKTHRYVIDLMHHAARNGQVNLTVRRKVLCGGEPCPENGRSPGSVSTHHSSPRSDYATYSNSNHAAPSSNASPPEGFASHSLQTSDVVIHRKENEGFGFVIISSLNRPESGATITVPHKIGRIIDGSPADRCAKLKVGDRILAVNGQSIINMPHADIVKLIKDAGLSVTLRIIPQEELNSPTSAPSSEKQSPMAQQHSPLAQQSPLAQPSPATPNSPVAQPAPPQPLQLQGHENSYRSEVKARQDVKPDIRQPPFTDYRQPPLDYRQPPGGDYSQPPPLDYRQHSPDTRQYPLSDYRQPQDFDYFTVDMEKGAKGFGFSIRGGREYKMDLYVLRLAEDGPAIRNGRMRVGDQIIEINGESTRDMTHARAIELIKSGGRRVRLLLKRGTGQVPEYGMVPSSLSMCMKSDKHGSPYFYLLGHPKDTTNPTPGVLPLPPPQACRK</sequence>
<dbReference type="EMBL" id="AB029485">
    <property type="protein sequence ID" value="BAA82294.1"/>
    <property type="molecule type" value="mRNA"/>
</dbReference>
<dbReference type="EMBL" id="AK039336">
    <property type="protein sequence ID" value="BAC30321.1"/>
    <property type="molecule type" value="mRNA"/>
</dbReference>
<dbReference type="EMBL" id="AK147530">
    <property type="protein sequence ID" value="BAE27976.1"/>
    <property type="molecule type" value="mRNA"/>
</dbReference>
<dbReference type="EMBL" id="BC059005">
    <property type="protein sequence ID" value="AAH59005.1"/>
    <property type="molecule type" value="mRNA"/>
</dbReference>
<dbReference type="CCDS" id="CCDS39019.1">
    <molecule id="Q9WVQ1-2"/>
</dbReference>
<dbReference type="CCDS" id="CCDS51424.1">
    <molecule id="Q9WVQ1-1"/>
</dbReference>
<dbReference type="CCDS" id="CCDS51425.1">
    <molecule id="Q9WVQ1-4"/>
</dbReference>
<dbReference type="RefSeq" id="NP_001164216.1">
    <molecule id="Q9WVQ1-4"/>
    <property type="nucleotide sequence ID" value="NM_001170745.1"/>
</dbReference>
<dbReference type="RefSeq" id="NP_001164217.1">
    <molecule id="Q9WVQ1-1"/>
    <property type="nucleotide sequence ID" value="NM_001170746.1"/>
</dbReference>
<dbReference type="RefSeq" id="NP_056638.1">
    <molecule id="Q9WVQ1-2"/>
    <property type="nucleotide sequence ID" value="NM_015823.3"/>
</dbReference>
<dbReference type="PDB" id="6JJZ">
    <property type="method" value="X-ray"/>
    <property type="resolution" value="1.65 A"/>
    <property type="chains" value="A/B=295-390"/>
</dbReference>
<dbReference type="PDB" id="6KKG">
    <property type="method" value="X-ray"/>
    <property type="resolution" value="2.15 A"/>
    <property type="chains" value="A/B=295-390"/>
</dbReference>
<dbReference type="PDB" id="7D6F">
    <property type="method" value="X-ray"/>
    <property type="resolution" value="2.70 A"/>
    <property type="chains" value="A=914-1010"/>
</dbReference>
<dbReference type="PDB" id="7YKF">
    <property type="method" value="X-ray"/>
    <property type="resolution" value="2.28 A"/>
    <property type="chains" value="A/C=9-238"/>
</dbReference>
<dbReference type="PDB" id="7YKG">
    <property type="method" value="X-ray"/>
    <property type="resolution" value="2.16 A"/>
    <property type="chains" value="A/C=9-238"/>
</dbReference>
<dbReference type="PDB" id="7YKH">
    <property type="method" value="X-ray"/>
    <property type="resolution" value="2.50 A"/>
    <property type="chains" value="A/C=9-238"/>
</dbReference>
<dbReference type="PDB" id="7YKI">
    <property type="method" value="X-ray"/>
    <property type="resolution" value="2.00 A"/>
    <property type="chains" value="A/C=9-238"/>
</dbReference>
<dbReference type="PDBsum" id="6JJZ"/>
<dbReference type="PDBsum" id="6KKG"/>
<dbReference type="PDBsum" id="7D6F"/>
<dbReference type="PDBsum" id="7YKF"/>
<dbReference type="PDBsum" id="7YKG"/>
<dbReference type="PDBsum" id="7YKH"/>
<dbReference type="PDBsum" id="7YKI"/>
<dbReference type="SMR" id="Q9WVQ1"/>
<dbReference type="BioGRID" id="206123">
    <property type="interactions" value="16"/>
</dbReference>
<dbReference type="CORUM" id="Q9WVQ1"/>
<dbReference type="FunCoup" id="Q9WVQ1">
    <property type="interactions" value="1471"/>
</dbReference>
<dbReference type="IntAct" id="Q9WVQ1">
    <property type="interactions" value="3"/>
</dbReference>
<dbReference type="MINT" id="Q9WVQ1"/>
<dbReference type="STRING" id="10090.ENSMUSP00000085872"/>
<dbReference type="GlyGen" id="Q9WVQ1">
    <property type="glycosylation" value="2 sites"/>
</dbReference>
<dbReference type="iPTMnet" id="Q9WVQ1"/>
<dbReference type="PhosphoSitePlus" id="Q9WVQ1"/>
<dbReference type="SwissPalm" id="Q9WVQ1"/>
<dbReference type="PaxDb" id="10090-ENSMUSP00000085872"/>
<dbReference type="PeptideAtlas" id="Q9WVQ1"/>
<dbReference type="ProteomicsDB" id="292077">
    <molecule id="Q9WVQ1-1"/>
</dbReference>
<dbReference type="ProteomicsDB" id="292078">
    <molecule id="Q9WVQ1-2"/>
</dbReference>
<dbReference type="ProteomicsDB" id="292079">
    <molecule id="Q9WVQ1-3"/>
</dbReference>
<dbReference type="ProteomicsDB" id="292080">
    <molecule id="Q9WVQ1-4"/>
</dbReference>
<dbReference type="Antibodypedia" id="2880">
    <property type="antibodies" value="266 antibodies from 33 providers"/>
</dbReference>
<dbReference type="Ensembl" id="ENSMUST00000088516.10">
    <molecule id="Q9WVQ1-1"/>
    <property type="protein sequence ID" value="ENSMUSP00000085872.4"/>
    <property type="gene ID" value="ENSMUSG00000040003.19"/>
</dbReference>
<dbReference type="Ensembl" id="ENSMUST00000101558.10">
    <molecule id="Q9WVQ1-4"/>
    <property type="protein sequence ID" value="ENSMUSP00000099094.4"/>
    <property type="gene ID" value="ENSMUSG00000040003.19"/>
</dbReference>
<dbReference type="Ensembl" id="ENSMUST00000115267.7">
    <molecule id="Q9WVQ1-2"/>
    <property type="protein sequence ID" value="ENSMUSP00000110922.3"/>
    <property type="gene ID" value="ENSMUSG00000040003.19"/>
</dbReference>
<dbReference type="Ensembl" id="ENSMUST00000197553.5">
    <molecule id="Q9WVQ1-3"/>
    <property type="protein sequence ID" value="ENSMUSP00000146769.2"/>
    <property type="gene ID" value="ENSMUSG00000040003.19"/>
</dbReference>
<dbReference type="GeneID" id="50791"/>
<dbReference type="KEGG" id="mmu:50791"/>
<dbReference type="UCSC" id="uc008wnv.2">
    <molecule id="Q9WVQ1-1"/>
    <property type="organism name" value="mouse"/>
</dbReference>
<dbReference type="UCSC" id="uc008wnw.2">
    <molecule id="Q9WVQ1-4"/>
    <property type="organism name" value="mouse"/>
</dbReference>
<dbReference type="UCSC" id="uc008wnx.1">
    <molecule id="Q9WVQ1-3"/>
    <property type="organism name" value="mouse"/>
</dbReference>
<dbReference type="AGR" id="MGI:1354953"/>
<dbReference type="CTD" id="9863"/>
<dbReference type="MGI" id="MGI:1354953">
    <property type="gene designation" value="Magi2"/>
</dbReference>
<dbReference type="VEuPathDB" id="HostDB:ENSMUSG00000040003"/>
<dbReference type="eggNOG" id="KOG3209">
    <property type="taxonomic scope" value="Eukaryota"/>
</dbReference>
<dbReference type="GeneTree" id="ENSGT00940000155057"/>
<dbReference type="HOGENOM" id="CLU_004562_1_0_1"/>
<dbReference type="InParanoid" id="Q9WVQ1"/>
<dbReference type="OMA" id="YLRTVPX"/>
<dbReference type="OrthoDB" id="66881at2759"/>
<dbReference type="PhylomeDB" id="Q9WVQ1"/>
<dbReference type="TreeFam" id="TF316816"/>
<dbReference type="BioGRID-ORCS" id="50791">
    <property type="hits" value="2 hits in 77 CRISPR screens"/>
</dbReference>
<dbReference type="CD-CODE" id="CE726F99">
    <property type="entry name" value="Postsynaptic density"/>
</dbReference>
<dbReference type="ChiTaRS" id="Magi2">
    <property type="organism name" value="mouse"/>
</dbReference>
<dbReference type="PRO" id="PR:Q9WVQ1"/>
<dbReference type="Proteomes" id="UP000000589">
    <property type="component" value="Chromosome 5"/>
</dbReference>
<dbReference type="RNAct" id="Q9WVQ1">
    <property type="molecule type" value="protein"/>
</dbReference>
<dbReference type="Bgee" id="ENSMUSG00000040003">
    <property type="expression patterns" value="Expressed in rostral migratory stream and 204 other cell types or tissues"/>
</dbReference>
<dbReference type="ExpressionAtlas" id="Q9WVQ1">
    <property type="expression patterns" value="baseline and differential"/>
</dbReference>
<dbReference type="GO" id="GO:0005923">
    <property type="term" value="C:bicellular tight junction"/>
    <property type="evidence" value="ECO:0000250"/>
    <property type="project" value="UniProtKB"/>
</dbReference>
<dbReference type="GO" id="GO:0005814">
    <property type="term" value="C:centriole"/>
    <property type="evidence" value="ECO:0000314"/>
    <property type="project" value="UniProtKB"/>
</dbReference>
<dbReference type="GO" id="GO:0005813">
    <property type="term" value="C:centrosome"/>
    <property type="evidence" value="ECO:0007669"/>
    <property type="project" value="UniProtKB-SubCell"/>
</dbReference>
<dbReference type="GO" id="GO:0097546">
    <property type="term" value="C:ciliary base"/>
    <property type="evidence" value="ECO:0000314"/>
    <property type="project" value="UniProtKB"/>
</dbReference>
<dbReference type="GO" id="GO:0005737">
    <property type="term" value="C:cytoplasm"/>
    <property type="evidence" value="ECO:0000314"/>
    <property type="project" value="UniProtKB"/>
</dbReference>
<dbReference type="GO" id="GO:0030425">
    <property type="term" value="C:dendrite"/>
    <property type="evidence" value="ECO:0000314"/>
    <property type="project" value="BHF-UCL"/>
</dbReference>
<dbReference type="GO" id="GO:0005770">
    <property type="term" value="C:late endosome"/>
    <property type="evidence" value="ECO:0000250"/>
    <property type="project" value="UniProtKB"/>
</dbReference>
<dbReference type="GO" id="GO:0005634">
    <property type="term" value="C:nucleus"/>
    <property type="evidence" value="ECO:0000250"/>
    <property type="project" value="UniProtKB"/>
</dbReference>
<dbReference type="GO" id="GO:0048471">
    <property type="term" value="C:perinuclear region of cytoplasm"/>
    <property type="evidence" value="ECO:0000250"/>
    <property type="project" value="UniProtKB"/>
</dbReference>
<dbReference type="GO" id="GO:0001917">
    <property type="term" value="C:photoreceptor inner segment"/>
    <property type="evidence" value="ECO:0000314"/>
    <property type="project" value="UniProtKB"/>
</dbReference>
<dbReference type="GO" id="GO:0001750">
    <property type="term" value="C:photoreceptor outer segment"/>
    <property type="evidence" value="ECO:0000314"/>
    <property type="project" value="UniProtKB"/>
</dbReference>
<dbReference type="GO" id="GO:0005886">
    <property type="term" value="C:plasma membrane"/>
    <property type="evidence" value="ECO:0000314"/>
    <property type="project" value="UniProtKB"/>
</dbReference>
<dbReference type="GO" id="GO:0014069">
    <property type="term" value="C:postsynaptic density"/>
    <property type="evidence" value="ECO:0000250"/>
    <property type="project" value="UniProtKB"/>
</dbReference>
<dbReference type="GO" id="GO:0032991">
    <property type="term" value="C:protein-containing complex"/>
    <property type="evidence" value="ECO:0000250"/>
    <property type="project" value="UniProtKB"/>
</dbReference>
<dbReference type="GO" id="GO:0036057">
    <property type="term" value="C:slit diaphragm"/>
    <property type="evidence" value="ECO:0000250"/>
    <property type="project" value="UniProtKB"/>
</dbReference>
<dbReference type="GO" id="GO:0045202">
    <property type="term" value="C:synapse"/>
    <property type="evidence" value="ECO:0000250"/>
    <property type="project" value="UniProtKB"/>
</dbReference>
<dbReference type="GO" id="GO:0070697">
    <property type="term" value="F:activin receptor binding"/>
    <property type="evidence" value="ECO:0000353"/>
    <property type="project" value="MGI"/>
</dbReference>
<dbReference type="GO" id="GO:0031697">
    <property type="term" value="F:beta-1 adrenergic receptor binding"/>
    <property type="evidence" value="ECO:0000250"/>
    <property type="project" value="UniProtKB"/>
</dbReference>
<dbReference type="GO" id="GO:0019902">
    <property type="term" value="F:phosphatase binding"/>
    <property type="evidence" value="ECO:0000250"/>
    <property type="project" value="UniProtKB"/>
</dbReference>
<dbReference type="GO" id="GO:0030159">
    <property type="term" value="F:signaling receptor complex adaptor activity"/>
    <property type="evidence" value="ECO:0000250"/>
    <property type="project" value="UniProtKB"/>
</dbReference>
<dbReference type="GO" id="GO:0046332">
    <property type="term" value="F:SMAD binding"/>
    <property type="evidence" value="ECO:0000353"/>
    <property type="project" value="UniProtKB"/>
</dbReference>
<dbReference type="GO" id="GO:0070699">
    <property type="term" value="F:type II activin receptor binding"/>
    <property type="evidence" value="ECO:0000353"/>
    <property type="project" value="UniProtKB"/>
</dbReference>
<dbReference type="GO" id="GO:1990090">
    <property type="term" value="P:cellular response to nerve growth factor stimulus"/>
    <property type="evidence" value="ECO:0000250"/>
    <property type="project" value="UniProtKB"/>
</dbReference>
<dbReference type="GO" id="GO:0072583">
    <property type="term" value="P:clathrin-dependent endocytosis"/>
    <property type="evidence" value="ECO:0000315"/>
    <property type="project" value="UniProtKB"/>
</dbReference>
<dbReference type="GO" id="GO:0032926">
    <property type="term" value="P:negative regulation of activin receptor signaling pathway"/>
    <property type="evidence" value="ECO:0000314"/>
    <property type="project" value="UniProtKB"/>
</dbReference>
<dbReference type="GO" id="GO:0030336">
    <property type="term" value="P:negative regulation of cell migration"/>
    <property type="evidence" value="ECO:0000250"/>
    <property type="project" value="UniProtKB"/>
</dbReference>
<dbReference type="GO" id="GO:0008285">
    <property type="term" value="P:negative regulation of cell population proliferation"/>
    <property type="evidence" value="ECO:0000250"/>
    <property type="project" value="UniProtKB"/>
</dbReference>
<dbReference type="GO" id="GO:0051898">
    <property type="term" value="P:negative regulation of phosphatidylinositol 3-kinase/protein kinase B signal transduction"/>
    <property type="evidence" value="ECO:0000250"/>
    <property type="project" value="UniProtKB"/>
</dbReference>
<dbReference type="GO" id="GO:0038180">
    <property type="term" value="P:nerve growth factor signaling pathway"/>
    <property type="evidence" value="ECO:0000250"/>
    <property type="project" value="UniProtKB"/>
</dbReference>
<dbReference type="GO" id="GO:0097118">
    <property type="term" value="P:neuroligin clustering involved in postsynaptic membrane assembly"/>
    <property type="evidence" value="ECO:0000314"/>
    <property type="project" value="BHF-UCL"/>
</dbReference>
<dbReference type="GO" id="GO:0072015">
    <property type="term" value="P:podocyte development"/>
    <property type="evidence" value="ECO:0000250"/>
    <property type="project" value="UniProtKB"/>
</dbReference>
<dbReference type="GO" id="GO:0010976">
    <property type="term" value="P:positive regulation of neuron projection development"/>
    <property type="evidence" value="ECO:0000250"/>
    <property type="project" value="UniProtKB"/>
</dbReference>
<dbReference type="GO" id="GO:0002092">
    <property type="term" value="P:positive regulation of receptor internalization"/>
    <property type="evidence" value="ECO:0000250"/>
    <property type="project" value="UniProtKB"/>
</dbReference>
<dbReference type="GO" id="GO:2000809">
    <property type="term" value="P:positive regulation of synaptic vesicle clustering"/>
    <property type="evidence" value="ECO:0000314"/>
    <property type="project" value="BHF-UCL"/>
</dbReference>
<dbReference type="GO" id="GO:0043113">
    <property type="term" value="P:receptor clustering"/>
    <property type="evidence" value="ECO:0000250"/>
    <property type="project" value="UniProtKB"/>
</dbReference>
<dbReference type="GO" id="GO:0007165">
    <property type="term" value="P:signal transduction"/>
    <property type="evidence" value="ECO:0000353"/>
    <property type="project" value="MGI"/>
</dbReference>
<dbReference type="GO" id="GO:0060395">
    <property type="term" value="P:SMAD protein signal transduction"/>
    <property type="evidence" value="ECO:0000314"/>
    <property type="project" value="UniProtKB"/>
</dbReference>
<dbReference type="CDD" id="cd06730">
    <property type="entry name" value="PDZ0_MAGI-1_3-like"/>
    <property type="match status" value="1"/>
</dbReference>
<dbReference type="CDD" id="cd06731">
    <property type="entry name" value="PDZ1_MAGI-1_3-like"/>
    <property type="match status" value="1"/>
</dbReference>
<dbReference type="CDD" id="cd06732">
    <property type="entry name" value="PDZ2_MAGI-1_3-like"/>
    <property type="match status" value="1"/>
</dbReference>
<dbReference type="CDD" id="cd06733">
    <property type="entry name" value="PDZ3_MAGI-1_3-like"/>
    <property type="match status" value="1"/>
</dbReference>
<dbReference type="CDD" id="cd06734">
    <property type="entry name" value="PDZ4_MAGI-1_3-like"/>
    <property type="match status" value="1"/>
</dbReference>
<dbReference type="CDD" id="cd06735">
    <property type="entry name" value="PDZ5_MAGI-1_3-like"/>
    <property type="match status" value="1"/>
</dbReference>
<dbReference type="CDD" id="cd00201">
    <property type="entry name" value="WW"/>
    <property type="match status" value="2"/>
</dbReference>
<dbReference type="FunFam" id="2.30.42.10:FF:000005">
    <property type="entry name" value="Membrane associated guanylate kinase, WW and PDZ domain containing 1"/>
    <property type="match status" value="1"/>
</dbReference>
<dbReference type="FunFam" id="2.30.42.10:FF:000006">
    <property type="entry name" value="Membrane associated guanylate kinase, WW and PDZ domain containing 1"/>
    <property type="match status" value="1"/>
</dbReference>
<dbReference type="FunFam" id="2.30.42.10:FF:000113">
    <property type="entry name" value="Membrane associated guanylate kinase, WW and PDZ domain containing 2"/>
    <property type="match status" value="1"/>
</dbReference>
<dbReference type="FunFam" id="2.30.42.10:FF:000144">
    <property type="entry name" value="Membrane associated guanylate kinase, WW and PDZ domain containing 2"/>
    <property type="match status" value="1"/>
</dbReference>
<dbReference type="FunFam" id="2.30.42.10:FF:000150">
    <property type="entry name" value="Membrane associated guanylate kinase, WW and PDZ domain containing 2"/>
    <property type="match status" value="1"/>
</dbReference>
<dbReference type="FunFam" id="2.20.70.10:FF:000001">
    <property type="entry name" value="Membrane-associated guanylate kinase, WW and PDZ domain-containing protein 1"/>
    <property type="match status" value="1"/>
</dbReference>
<dbReference type="FunFam" id="2.30.42.10:FF:000155">
    <property type="entry name" value="membrane-associated guanylate kinase, WW and PDZ domain-containing protein 2 isoform X4"/>
    <property type="match status" value="1"/>
</dbReference>
<dbReference type="FunFam" id="2.20.70.10:FF:000002">
    <property type="entry name" value="Membrane-associated guanylate kinase, WW and PDZ domain-containing protein 3 isoform 1"/>
    <property type="match status" value="1"/>
</dbReference>
<dbReference type="FunFam" id="3.30.63.10:FF:000003">
    <property type="entry name" value="Membrane-associated guanylate kinase, WW and PDZ domain-containing protein 3 isoform 1"/>
    <property type="match status" value="1"/>
</dbReference>
<dbReference type="Gene3D" id="2.20.70.10">
    <property type="match status" value="2"/>
</dbReference>
<dbReference type="Gene3D" id="2.30.42.10">
    <property type="match status" value="6"/>
</dbReference>
<dbReference type="Gene3D" id="3.30.63.10">
    <property type="entry name" value="Guanylate Kinase phosphate binding domain"/>
    <property type="match status" value="1"/>
</dbReference>
<dbReference type="InterPro" id="IPR008145">
    <property type="entry name" value="GK/Ca_channel_bsu"/>
</dbReference>
<dbReference type="InterPro" id="IPR008144">
    <property type="entry name" value="Guanylate_kin-like_dom"/>
</dbReference>
<dbReference type="InterPro" id="IPR020590">
    <property type="entry name" value="Guanylate_kinase_CS"/>
</dbReference>
<dbReference type="InterPro" id="IPR027417">
    <property type="entry name" value="P-loop_NTPase"/>
</dbReference>
<dbReference type="InterPro" id="IPR001478">
    <property type="entry name" value="PDZ"/>
</dbReference>
<dbReference type="InterPro" id="IPR036034">
    <property type="entry name" value="PDZ_sf"/>
</dbReference>
<dbReference type="InterPro" id="IPR001202">
    <property type="entry name" value="WW_dom"/>
</dbReference>
<dbReference type="InterPro" id="IPR036020">
    <property type="entry name" value="WW_dom_sf"/>
</dbReference>
<dbReference type="PANTHER" id="PTHR10316">
    <property type="entry name" value="MEMBRANE ASSOCIATED GUANYLATE KINASE-RELATED"/>
    <property type="match status" value="1"/>
</dbReference>
<dbReference type="PANTHER" id="PTHR10316:SF27">
    <property type="entry name" value="MEMBRANE-ASSOCIATED GUANYLATE KINASE, WW AND PDZ DOMAIN-CONTAINING PROTEIN 2"/>
    <property type="match status" value="1"/>
</dbReference>
<dbReference type="Pfam" id="PF00625">
    <property type="entry name" value="Guanylate_kin"/>
    <property type="match status" value="1"/>
</dbReference>
<dbReference type="Pfam" id="PF16663">
    <property type="entry name" value="MAGI_u1"/>
    <property type="match status" value="1"/>
</dbReference>
<dbReference type="Pfam" id="PF00595">
    <property type="entry name" value="PDZ"/>
    <property type="match status" value="6"/>
</dbReference>
<dbReference type="Pfam" id="PF00397">
    <property type="entry name" value="WW"/>
    <property type="match status" value="1"/>
</dbReference>
<dbReference type="SMART" id="SM00072">
    <property type="entry name" value="GuKc"/>
    <property type="match status" value="1"/>
</dbReference>
<dbReference type="SMART" id="SM00228">
    <property type="entry name" value="PDZ"/>
    <property type="match status" value="6"/>
</dbReference>
<dbReference type="SMART" id="SM00456">
    <property type="entry name" value="WW"/>
    <property type="match status" value="2"/>
</dbReference>
<dbReference type="SUPFAM" id="SSF52540">
    <property type="entry name" value="P-loop containing nucleoside triphosphate hydrolases"/>
    <property type="match status" value="1"/>
</dbReference>
<dbReference type="SUPFAM" id="SSF50156">
    <property type="entry name" value="PDZ domain-like"/>
    <property type="match status" value="6"/>
</dbReference>
<dbReference type="SUPFAM" id="SSF51045">
    <property type="entry name" value="WW domain"/>
    <property type="match status" value="2"/>
</dbReference>
<dbReference type="PROSITE" id="PS00856">
    <property type="entry name" value="GUANYLATE_KINASE_1"/>
    <property type="match status" value="1"/>
</dbReference>
<dbReference type="PROSITE" id="PS50052">
    <property type="entry name" value="GUANYLATE_KINASE_2"/>
    <property type="match status" value="1"/>
</dbReference>
<dbReference type="PROSITE" id="PS50106">
    <property type="entry name" value="PDZ"/>
    <property type="match status" value="6"/>
</dbReference>
<dbReference type="PROSITE" id="PS01159">
    <property type="entry name" value="WW_DOMAIN_1"/>
    <property type="match status" value="2"/>
</dbReference>
<dbReference type="PROSITE" id="PS50020">
    <property type="entry name" value="WW_DOMAIN_2"/>
    <property type="match status" value="2"/>
</dbReference>
<evidence type="ECO:0000250" key="1"/>
<evidence type="ECO:0000250" key="2">
    <source>
        <dbReference type="UniProtKB" id="O88382"/>
    </source>
</evidence>
<evidence type="ECO:0000250" key="3">
    <source>
        <dbReference type="UniProtKB" id="Q86UL8"/>
    </source>
</evidence>
<evidence type="ECO:0000255" key="4">
    <source>
        <dbReference type="PROSITE-ProRule" id="PRU00100"/>
    </source>
</evidence>
<evidence type="ECO:0000255" key="5">
    <source>
        <dbReference type="PROSITE-ProRule" id="PRU00143"/>
    </source>
</evidence>
<evidence type="ECO:0000255" key="6">
    <source>
        <dbReference type="PROSITE-ProRule" id="PRU00224"/>
    </source>
</evidence>
<evidence type="ECO:0000256" key="7">
    <source>
        <dbReference type="SAM" id="MobiDB-lite"/>
    </source>
</evidence>
<evidence type="ECO:0000269" key="8">
    <source>
    </source>
</evidence>
<evidence type="ECO:0000269" key="9">
    <source>
    </source>
</evidence>
<evidence type="ECO:0000269" key="10">
    <source>
    </source>
</evidence>
<evidence type="ECO:0000269" key="11">
    <source>
    </source>
</evidence>
<evidence type="ECO:0000269" key="12">
    <source>
    </source>
</evidence>
<evidence type="ECO:0000269" key="13">
    <source>
    </source>
</evidence>
<evidence type="ECO:0000269" key="14">
    <source>
    </source>
</evidence>
<evidence type="ECO:0000303" key="15">
    <source>
    </source>
</evidence>
<evidence type="ECO:0000303" key="16">
    <source>
    </source>
</evidence>
<evidence type="ECO:0000303" key="17">
    <source>
    </source>
</evidence>
<evidence type="ECO:0000305" key="18"/>
<evidence type="ECO:0007744" key="19">
    <source>
    </source>
</evidence>
<evidence type="ECO:0007744" key="20">
    <source>
    </source>
</evidence>
<evidence type="ECO:0007829" key="21">
    <source>
        <dbReference type="PDB" id="6JJZ"/>
    </source>
</evidence>
<evidence type="ECO:0007829" key="22">
    <source>
        <dbReference type="PDB" id="7D6F"/>
    </source>
</evidence>
<evidence type="ECO:0007829" key="23">
    <source>
        <dbReference type="PDB" id="7YKH"/>
    </source>
</evidence>
<evidence type="ECO:0007829" key="24">
    <source>
        <dbReference type="PDB" id="7YKI"/>
    </source>
</evidence>
<organism>
    <name type="scientific">Mus musculus</name>
    <name type="common">Mouse</name>
    <dbReference type="NCBI Taxonomy" id="10090"/>
    <lineage>
        <taxon>Eukaryota</taxon>
        <taxon>Metazoa</taxon>
        <taxon>Chordata</taxon>
        <taxon>Craniata</taxon>
        <taxon>Vertebrata</taxon>
        <taxon>Euteleostomi</taxon>
        <taxon>Mammalia</taxon>
        <taxon>Eutheria</taxon>
        <taxon>Euarchontoglires</taxon>
        <taxon>Glires</taxon>
        <taxon>Rodentia</taxon>
        <taxon>Myomorpha</taxon>
        <taxon>Muroidea</taxon>
        <taxon>Muridae</taxon>
        <taxon>Murinae</taxon>
        <taxon>Mus</taxon>
        <taxon>Mus</taxon>
    </lineage>
</organism>